<sequence>MNIIKKIEGEHLRFDLPKFKSGDTVKVHLRIVEGEKERIQVFQGNVIRIHRGTTGGTFTVRKVSDGVGVERVFPLHSPFIDRVEMVTEGRVRRSRLYYLRELKGKAARIKPKNRF</sequence>
<keyword id="KW-0687">Ribonucleoprotein</keyword>
<keyword id="KW-0689">Ribosomal protein</keyword>
<reference key="1">
    <citation type="submission" date="2008-10" db="EMBL/GenBank/DDBJ databases">
        <title>Complete sequence of Desulfovibrio vulgaris str. 'Miyazaki F'.</title>
        <authorList>
            <person name="Lucas S."/>
            <person name="Copeland A."/>
            <person name="Lapidus A."/>
            <person name="Glavina del Rio T."/>
            <person name="Dalin E."/>
            <person name="Tice H."/>
            <person name="Bruce D."/>
            <person name="Goodwin L."/>
            <person name="Pitluck S."/>
            <person name="Sims D."/>
            <person name="Brettin T."/>
            <person name="Detter J.C."/>
            <person name="Han C."/>
            <person name="Larimer F."/>
            <person name="Land M."/>
            <person name="Hauser L."/>
            <person name="Kyrpides N."/>
            <person name="Mikhailova N."/>
            <person name="Hazen T.C."/>
            <person name="Richardson P."/>
        </authorList>
    </citation>
    <scope>NUCLEOTIDE SEQUENCE [LARGE SCALE GENOMIC DNA]</scope>
    <source>
        <strain>DSM 19637 / Miyazaki F</strain>
    </source>
</reference>
<comment type="function">
    <text evidence="1">This protein is located at the 30S-50S ribosomal subunit interface and may play a role in the structure and function of the aminoacyl-tRNA binding site.</text>
</comment>
<comment type="similarity">
    <text evidence="1">Belongs to the bacterial ribosomal protein bL19 family.</text>
</comment>
<gene>
    <name evidence="1" type="primary">rplS</name>
    <name type="ordered locus">DvMF_2883</name>
</gene>
<evidence type="ECO:0000255" key="1">
    <source>
        <dbReference type="HAMAP-Rule" id="MF_00402"/>
    </source>
</evidence>
<evidence type="ECO:0000305" key="2"/>
<accession>B8DRI3</accession>
<proteinExistence type="inferred from homology"/>
<organism>
    <name type="scientific">Nitratidesulfovibrio vulgaris (strain DSM 19637 / Miyazaki F)</name>
    <name type="common">Desulfovibrio vulgaris</name>
    <dbReference type="NCBI Taxonomy" id="883"/>
    <lineage>
        <taxon>Bacteria</taxon>
        <taxon>Pseudomonadati</taxon>
        <taxon>Thermodesulfobacteriota</taxon>
        <taxon>Desulfovibrionia</taxon>
        <taxon>Desulfovibrionales</taxon>
        <taxon>Desulfovibrionaceae</taxon>
        <taxon>Nitratidesulfovibrio</taxon>
    </lineage>
</organism>
<dbReference type="EMBL" id="CP001197">
    <property type="protein sequence ID" value="ACL09820.1"/>
    <property type="molecule type" value="Genomic_DNA"/>
</dbReference>
<dbReference type="SMR" id="B8DRI3"/>
<dbReference type="STRING" id="883.DvMF_2883"/>
<dbReference type="KEGG" id="dvm:DvMF_2883"/>
<dbReference type="eggNOG" id="COG0335">
    <property type="taxonomic scope" value="Bacteria"/>
</dbReference>
<dbReference type="HOGENOM" id="CLU_103507_2_2_7"/>
<dbReference type="OrthoDB" id="9803541at2"/>
<dbReference type="GO" id="GO:0022625">
    <property type="term" value="C:cytosolic large ribosomal subunit"/>
    <property type="evidence" value="ECO:0007669"/>
    <property type="project" value="TreeGrafter"/>
</dbReference>
<dbReference type="GO" id="GO:0003735">
    <property type="term" value="F:structural constituent of ribosome"/>
    <property type="evidence" value="ECO:0007669"/>
    <property type="project" value="InterPro"/>
</dbReference>
<dbReference type="GO" id="GO:0006412">
    <property type="term" value="P:translation"/>
    <property type="evidence" value="ECO:0007669"/>
    <property type="project" value="UniProtKB-UniRule"/>
</dbReference>
<dbReference type="FunFam" id="2.30.30.790:FF:000001">
    <property type="entry name" value="50S ribosomal protein L19"/>
    <property type="match status" value="1"/>
</dbReference>
<dbReference type="Gene3D" id="2.30.30.790">
    <property type="match status" value="1"/>
</dbReference>
<dbReference type="HAMAP" id="MF_00402">
    <property type="entry name" value="Ribosomal_bL19"/>
    <property type="match status" value="1"/>
</dbReference>
<dbReference type="InterPro" id="IPR001857">
    <property type="entry name" value="Ribosomal_bL19"/>
</dbReference>
<dbReference type="InterPro" id="IPR018257">
    <property type="entry name" value="Ribosomal_bL19_CS"/>
</dbReference>
<dbReference type="InterPro" id="IPR038657">
    <property type="entry name" value="Ribosomal_bL19_sf"/>
</dbReference>
<dbReference type="InterPro" id="IPR008991">
    <property type="entry name" value="Translation_prot_SH3-like_sf"/>
</dbReference>
<dbReference type="NCBIfam" id="TIGR01024">
    <property type="entry name" value="rplS_bact"/>
    <property type="match status" value="1"/>
</dbReference>
<dbReference type="PANTHER" id="PTHR15680:SF9">
    <property type="entry name" value="LARGE RIBOSOMAL SUBUNIT PROTEIN BL19M"/>
    <property type="match status" value="1"/>
</dbReference>
<dbReference type="PANTHER" id="PTHR15680">
    <property type="entry name" value="RIBOSOMAL PROTEIN L19"/>
    <property type="match status" value="1"/>
</dbReference>
<dbReference type="Pfam" id="PF01245">
    <property type="entry name" value="Ribosomal_L19"/>
    <property type="match status" value="1"/>
</dbReference>
<dbReference type="PIRSF" id="PIRSF002191">
    <property type="entry name" value="Ribosomal_L19"/>
    <property type="match status" value="1"/>
</dbReference>
<dbReference type="PRINTS" id="PR00061">
    <property type="entry name" value="RIBOSOMALL19"/>
</dbReference>
<dbReference type="SUPFAM" id="SSF50104">
    <property type="entry name" value="Translation proteins SH3-like domain"/>
    <property type="match status" value="1"/>
</dbReference>
<dbReference type="PROSITE" id="PS01015">
    <property type="entry name" value="RIBOSOMAL_L19"/>
    <property type="match status" value="1"/>
</dbReference>
<protein>
    <recommendedName>
        <fullName evidence="1">Large ribosomal subunit protein bL19</fullName>
    </recommendedName>
    <alternativeName>
        <fullName evidence="2">50S ribosomal protein L19</fullName>
    </alternativeName>
</protein>
<name>RL19_NITV9</name>
<feature type="chain" id="PRO_1000193824" description="Large ribosomal subunit protein bL19">
    <location>
        <begin position="1"/>
        <end position="115"/>
    </location>
</feature>